<feature type="chain" id="PRO_0000059141" description="Polypeptide N-acetylgalactosaminyltransferase 18">
    <location>
        <begin position="1"/>
        <end position="607"/>
    </location>
</feature>
<feature type="topological domain" description="Cytoplasmic" evidence="3">
    <location>
        <begin position="1"/>
        <end position="12"/>
    </location>
</feature>
<feature type="transmembrane region" description="Helical; Signal-anchor for type II membrane protein" evidence="3">
    <location>
        <begin position="13"/>
        <end position="35"/>
    </location>
</feature>
<feature type="topological domain" description="Lumenal" evidence="3">
    <location>
        <begin position="36"/>
        <end position="607"/>
    </location>
</feature>
<feature type="domain" description="Ricin B-type lectin" evidence="4">
    <location>
        <begin position="469"/>
        <end position="599"/>
    </location>
</feature>
<feature type="region of interest" description="Catalytic subdomain A">
    <location>
        <begin position="153"/>
        <end position="267"/>
    </location>
</feature>
<feature type="region of interest" description="Catalytic subdomain B">
    <location>
        <begin position="324"/>
        <end position="385"/>
    </location>
</feature>
<feature type="binding site" evidence="2">
    <location>
        <position position="194"/>
    </location>
    <ligand>
        <name>substrate</name>
    </ligand>
</feature>
<feature type="binding site" evidence="2">
    <location>
        <position position="251"/>
    </location>
    <ligand>
        <name>Mn(2+)</name>
        <dbReference type="ChEBI" id="CHEBI:29035"/>
    </ligand>
</feature>
<feature type="binding site" evidence="2">
    <location>
        <position position="253"/>
    </location>
    <ligand>
        <name>Mn(2+)</name>
        <dbReference type="ChEBI" id="CHEBI:29035"/>
    </ligand>
</feature>
<feature type="binding site" evidence="2">
    <location>
        <position position="382"/>
    </location>
    <ligand>
        <name>Mn(2+)</name>
        <dbReference type="ChEBI" id="CHEBI:29035"/>
    </ligand>
</feature>
<feature type="binding site" evidence="2">
    <location>
        <position position="385"/>
    </location>
    <ligand>
        <name>substrate</name>
    </ligand>
</feature>
<feature type="binding site" evidence="2">
    <location>
        <position position="390"/>
    </location>
    <ligand>
        <name>substrate</name>
    </ligand>
</feature>
<feature type="glycosylation site" description="N-linked (GlcNAc...) asparagine" evidence="3">
    <location>
        <position position="146"/>
    </location>
</feature>
<feature type="glycosylation site" description="N-linked (GlcNAc...) asparagine" evidence="3">
    <location>
        <position position="195"/>
    </location>
</feature>
<feature type="glycosylation site" description="N-linked (GlcNAc...) asparagine" evidence="3">
    <location>
        <position position="320"/>
    </location>
</feature>
<feature type="disulfide bond" evidence="4">
    <location>
        <begin position="144"/>
        <end position="377"/>
    </location>
</feature>
<feature type="disulfide bond" evidence="4">
    <location>
        <begin position="368"/>
        <end position="447"/>
    </location>
</feature>
<feature type="disulfide bond" evidence="4">
    <location>
        <begin position="482"/>
        <end position="498"/>
    </location>
</feature>
<feature type="disulfide bond" evidence="4">
    <location>
        <begin position="530"/>
        <end position="543"/>
    </location>
</feature>
<feature type="disulfide bond" evidence="4">
    <location>
        <begin position="571"/>
        <end position="591"/>
    </location>
</feature>
<feature type="splice variant" id="VSP_011234" description="In isoform 2." evidence="6">
    <original>EAPAKPEEAEAEP</original>
    <variation>GYRRNFSLLNVSN</variation>
    <location>
        <begin position="79"/>
        <end position="91"/>
    </location>
</feature>
<feature type="splice variant" id="VSP_011235" description="In isoform 2." evidence="6">
    <location>
        <begin position="92"/>
        <end position="607"/>
    </location>
</feature>
<feature type="sequence conflict" description="In Ref. 2; AAH60864." evidence="7" ref="2">
    <original>D</original>
    <variation>G</variation>
    <location>
        <position position="133"/>
    </location>
</feature>
<feature type="sequence conflict" description="In Ref. 2; AAH60864." evidence="7" ref="2">
    <original>I</original>
    <variation>T</variation>
    <location>
        <position position="541"/>
    </location>
</feature>
<organism>
    <name type="scientific">Homo sapiens</name>
    <name type="common">Human</name>
    <dbReference type="NCBI Taxonomy" id="9606"/>
    <lineage>
        <taxon>Eukaryota</taxon>
        <taxon>Metazoa</taxon>
        <taxon>Chordata</taxon>
        <taxon>Craniata</taxon>
        <taxon>Vertebrata</taxon>
        <taxon>Euteleostomi</taxon>
        <taxon>Mammalia</taxon>
        <taxon>Eutheria</taxon>
        <taxon>Euarchontoglires</taxon>
        <taxon>Primates</taxon>
        <taxon>Haplorrhini</taxon>
        <taxon>Catarrhini</taxon>
        <taxon>Hominidae</taxon>
        <taxon>Homo</taxon>
    </lineage>
</organism>
<comment type="function">
    <text evidence="5">Catalyzes the initial reaction in O-linked oligosaccharide biosynthesis, the transfer of an N-acetyl-D-galactosamine (GalNAc) residue from UDP-GalNAc to a serine or threonine residue on the protein receptor.</text>
</comment>
<comment type="catalytic activity">
    <reaction evidence="8">
        <text>L-seryl-[protein] + UDP-N-acetyl-alpha-D-galactosamine = a 3-O-[N-acetyl-alpha-D-galactosaminyl]-L-seryl-[protein] + UDP + H(+)</text>
        <dbReference type="Rhea" id="RHEA:23956"/>
        <dbReference type="Rhea" id="RHEA-COMP:9863"/>
        <dbReference type="Rhea" id="RHEA-COMP:12788"/>
        <dbReference type="ChEBI" id="CHEBI:15378"/>
        <dbReference type="ChEBI" id="CHEBI:29999"/>
        <dbReference type="ChEBI" id="CHEBI:53604"/>
        <dbReference type="ChEBI" id="CHEBI:58223"/>
        <dbReference type="ChEBI" id="CHEBI:67138"/>
        <dbReference type="EC" id="2.4.1.41"/>
    </reaction>
    <physiologicalReaction direction="left-to-right" evidence="8">
        <dbReference type="Rhea" id="RHEA:23957"/>
    </physiologicalReaction>
</comment>
<comment type="catalytic activity">
    <reaction evidence="8">
        <text>L-threonyl-[protein] + UDP-N-acetyl-alpha-D-galactosamine = a 3-O-[N-acetyl-alpha-D-galactosaminyl]-L-threonyl-[protein] + UDP + H(+)</text>
        <dbReference type="Rhea" id="RHEA:52424"/>
        <dbReference type="Rhea" id="RHEA-COMP:11060"/>
        <dbReference type="Rhea" id="RHEA-COMP:11689"/>
        <dbReference type="ChEBI" id="CHEBI:15378"/>
        <dbReference type="ChEBI" id="CHEBI:30013"/>
        <dbReference type="ChEBI" id="CHEBI:58223"/>
        <dbReference type="ChEBI" id="CHEBI:67138"/>
        <dbReference type="ChEBI" id="CHEBI:87075"/>
        <dbReference type="EC" id="2.4.1.41"/>
    </reaction>
    <physiologicalReaction direction="left-to-right" evidence="8">
        <dbReference type="Rhea" id="RHEA:52425"/>
    </physiologicalReaction>
</comment>
<comment type="cofactor">
    <cofactor evidence="1">
        <name>Mn(2+)</name>
        <dbReference type="ChEBI" id="CHEBI:29035"/>
    </cofactor>
</comment>
<comment type="pathway">
    <text evidence="8">Protein modification; protein glycosylation.</text>
</comment>
<comment type="subcellular location">
    <subcellularLocation>
        <location evidence="1">Golgi apparatus membrane</location>
        <topology evidence="1">Single-pass type II membrane protein</topology>
    </subcellularLocation>
</comment>
<comment type="alternative products">
    <event type="alternative splicing"/>
    <isoform>
        <id>Q6P9A2-1</id>
        <name>1</name>
        <sequence type="displayed"/>
    </isoform>
    <isoform>
        <id>Q6P9A2-2</id>
        <name>2</name>
        <sequence type="described" ref="VSP_011234 VSP_011235"/>
    </isoform>
</comment>
<comment type="domain">
    <text evidence="1">There are two conserved domains in the glycosyltransferase region: the N-terminal domain (domain A, also called GT1 motif), which is probably involved in manganese coordination and substrate binding and the C-terminal domain (domain B, also called Gal/GalNAc-T motif), which is probably involved in catalytic reaction and UDP-Gal binding.</text>
</comment>
<comment type="domain">
    <text evidence="1">The ricin B-type lectin domain binds to GalNAc and contributes to the glycopeptide specificity.</text>
</comment>
<comment type="similarity">
    <text evidence="7">Belongs to the glycosyltransferase 2 family. GalNAc-T subfamily.</text>
</comment>
<comment type="sequence caution" evidence="7">
    <conflict type="erroneous initiation">
        <sequence resource="EMBL-CDS" id="AAD20062"/>
    </conflict>
    <text>Extended N-terminus.</text>
</comment>
<name>GLT18_HUMAN</name>
<evidence type="ECO:0000250" key="1"/>
<evidence type="ECO:0000250" key="2">
    <source>
        <dbReference type="UniProtKB" id="Q10471"/>
    </source>
</evidence>
<evidence type="ECO:0000255" key="3"/>
<evidence type="ECO:0000255" key="4">
    <source>
        <dbReference type="PROSITE-ProRule" id="PRU00174"/>
    </source>
</evidence>
<evidence type="ECO:0000269" key="5">
    <source>
    </source>
</evidence>
<evidence type="ECO:0000303" key="6">
    <source ref="1"/>
</evidence>
<evidence type="ECO:0000305" key="7"/>
<evidence type="ECO:0000305" key="8">
    <source>
    </source>
</evidence>
<gene>
    <name type="primary">GALNT18</name>
    <name type="synonym">GALNTL4</name>
</gene>
<proteinExistence type="evidence at protein level"/>
<dbReference type="EC" id="2.4.1.41" evidence="8"/>
<dbReference type="EMBL" id="AF131852">
    <property type="protein sequence ID" value="AAD20062.1"/>
    <property type="status" value="ALT_INIT"/>
    <property type="molecule type" value="mRNA"/>
</dbReference>
<dbReference type="EMBL" id="BC060864">
    <property type="protein sequence ID" value="AAH60864.1"/>
    <property type="molecule type" value="mRNA"/>
</dbReference>
<dbReference type="EMBL" id="BC037341">
    <property type="protein sequence ID" value="AAH37341.3"/>
    <property type="molecule type" value="mRNA"/>
</dbReference>
<dbReference type="CCDS" id="CCDS7807.1">
    <molecule id="Q6P9A2-1"/>
</dbReference>
<dbReference type="RefSeq" id="NP_940918.2">
    <molecule id="Q6P9A2-1"/>
    <property type="nucleotide sequence ID" value="NM_198516.3"/>
</dbReference>
<dbReference type="SMR" id="Q6P9A2"/>
<dbReference type="BioGRID" id="131894">
    <property type="interactions" value="86"/>
</dbReference>
<dbReference type="FunCoup" id="Q6P9A2">
    <property type="interactions" value="62"/>
</dbReference>
<dbReference type="IntAct" id="Q6P9A2">
    <property type="interactions" value="57"/>
</dbReference>
<dbReference type="STRING" id="9606.ENSP00000227756"/>
<dbReference type="CAZy" id="CBM13">
    <property type="family name" value="Carbohydrate-Binding Module Family 13"/>
</dbReference>
<dbReference type="CAZy" id="GT27">
    <property type="family name" value="Glycosyltransferase Family 27"/>
</dbReference>
<dbReference type="GlyCosmos" id="Q6P9A2">
    <property type="glycosylation" value="4 sites, 1 glycan"/>
</dbReference>
<dbReference type="GlyGen" id="Q6P9A2">
    <property type="glycosylation" value="4 sites, 2 N-linked glycans (2 sites), 1 O-linked glycan (1 site)"/>
</dbReference>
<dbReference type="iPTMnet" id="Q6P9A2"/>
<dbReference type="PhosphoSitePlus" id="Q6P9A2"/>
<dbReference type="BioMuta" id="GALNT18"/>
<dbReference type="DMDM" id="116242498"/>
<dbReference type="MassIVE" id="Q6P9A2"/>
<dbReference type="PaxDb" id="9606-ENSP00000227756"/>
<dbReference type="PeptideAtlas" id="Q6P9A2"/>
<dbReference type="ProteomicsDB" id="67031">
    <molecule id="Q6P9A2-1"/>
</dbReference>
<dbReference type="ProteomicsDB" id="67032">
    <molecule id="Q6P9A2-2"/>
</dbReference>
<dbReference type="Antibodypedia" id="2327">
    <property type="antibodies" value="48 antibodies from 18 providers"/>
</dbReference>
<dbReference type="DNASU" id="374378"/>
<dbReference type="Ensembl" id="ENST00000227756.5">
    <molecule id="Q6P9A2-1"/>
    <property type="protein sequence ID" value="ENSP00000227756.4"/>
    <property type="gene ID" value="ENSG00000110328.6"/>
</dbReference>
<dbReference type="GeneID" id="374378"/>
<dbReference type="KEGG" id="hsa:374378"/>
<dbReference type="MANE-Select" id="ENST00000227756.5">
    <property type="protein sequence ID" value="ENSP00000227756.4"/>
    <property type="RefSeq nucleotide sequence ID" value="NM_198516.3"/>
    <property type="RefSeq protein sequence ID" value="NP_940918.2"/>
</dbReference>
<dbReference type="UCSC" id="uc001mjo.3">
    <molecule id="Q6P9A2-1"/>
    <property type="organism name" value="human"/>
</dbReference>
<dbReference type="AGR" id="HGNC:30488"/>
<dbReference type="CTD" id="374378"/>
<dbReference type="DisGeNET" id="374378"/>
<dbReference type="GeneCards" id="GALNT18"/>
<dbReference type="HGNC" id="HGNC:30488">
    <property type="gene designation" value="GALNT18"/>
</dbReference>
<dbReference type="HPA" id="ENSG00000110328">
    <property type="expression patterns" value="Low tissue specificity"/>
</dbReference>
<dbReference type="MIM" id="615136">
    <property type="type" value="gene"/>
</dbReference>
<dbReference type="neXtProt" id="NX_Q6P9A2"/>
<dbReference type="OpenTargets" id="ENSG00000110328"/>
<dbReference type="PharmGKB" id="PA134950929"/>
<dbReference type="VEuPathDB" id="HostDB:ENSG00000110328"/>
<dbReference type="eggNOG" id="KOG3736">
    <property type="taxonomic scope" value="Eukaryota"/>
</dbReference>
<dbReference type="GeneTree" id="ENSGT00940000155456"/>
<dbReference type="HOGENOM" id="CLU_013477_4_0_1"/>
<dbReference type="InParanoid" id="Q6P9A2"/>
<dbReference type="OMA" id="WHRGNKS"/>
<dbReference type="OrthoDB" id="9924649at2759"/>
<dbReference type="PAN-GO" id="Q6P9A2">
    <property type="GO annotations" value="3 GO annotations based on evolutionary models"/>
</dbReference>
<dbReference type="PhylomeDB" id="Q6P9A2"/>
<dbReference type="TreeFam" id="TF313267"/>
<dbReference type="BRENDA" id="2.4.1.41">
    <property type="organism ID" value="2681"/>
</dbReference>
<dbReference type="PathwayCommons" id="Q6P9A2"/>
<dbReference type="Reactome" id="R-HSA-913709">
    <property type="pathway name" value="O-linked glycosylation of mucins"/>
</dbReference>
<dbReference type="SignaLink" id="Q6P9A2"/>
<dbReference type="UniPathway" id="UPA00378"/>
<dbReference type="BioGRID-ORCS" id="374378">
    <property type="hits" value="11 hits in 1147 CRISPR screens"/>
</dbReference>
<dbReference type="ChiTaRS" id="GALNT18">
    <property type="organism name" value="human"/>
</dbReference>
<dbReference type="GenomeRNAi" id="374378"/>
<dbReference type="Pharos" id="Q6P9A2">
    <property type="development level" value="Tbio"/>
</dbReference>
<dbReference type="PRO" id="PR:Q6P9A2"/>
<dbReference type="Proteomes" id="UP000005640">
    <property type="component" value="Chromosome 11"/>
</dbReference>
<dbReference type="RNAct" id="Q6P9A2">
    <property type="molecule type" value="protein"/>
</dbReference>
<dbReference type="Bgee" id="ENSG00000110328">
    <property type="expression patterns" value="Expressed in right lung and 150 other cell types or tissues"/>
</dbReference>
<dbReference type="ExpressionAtlas" id="Q6P9A2">
    <property type="expression patterns" value="baseline and differential"/>
</dbReference>
<dbReference type="GO" id="GO:0005794">
    <property type="term" value="C:Golgi apparatus"/>
    <property type="evidence" value="ECO:0000318"/>
    <property type="project" value="GO_Central"/>
</dbReference>
<dbReference type="GO" id="GO:0000139">
    <property type="term" value="C:Golgi membrane"/>
    <property type="evidence" value="ECO:0007669"/>
    <property type="project" value="UniProtKB-SubCell"/>
</dbReference>
<dbReference type="GO" id="GO:0030246">
    <property type="term" value="F:carbohydrate binding"/>
    <property type="evidence" value="ECO:0007669"/>
    <property type="project" value="UniProtKB-KW"/>
</dbReference>
<dbReference type="GO" id="GO:0046872">
    <property type="term" value="F:metal ion binding"/>
    <property type="evidence" value="ECO:0007669"/>
    <property type="project" value="UniProtKB-KW"/>
</dbReference>
<dbReference type="GO" id="GO:0004653">
    <property type="term" value="F:polypeptide N-acetylgalactosaminyltransferase activity"/>
    <property type="evidence" value="ECO:0000314"/>
    <property type="project" value="UniProtKB"/>
</dbReference>
<dbReference type="GO" id="GO:0006493">
    <property type="term" value="P:protein O-linked glycosylation"/>
    <property type="evidence" value="ECO:0000314"/>
    <property type="project" value="UniProtKB"/>
</dbReference>
<dbReference type="CDD" id="cd23475">
    <property type="entry name" value="beta-trefoil_Ricin_GALNT18"/>
    <property type="match status" value="1"/>
</dbReference>
<dbReference type="CDD" id="cd02510">
    <property type="entry name" value="pp-GalNAc-T"/>
    <property type="match status" value="1"/>
</dbReference>
<dbReference type="FunFam" id="2.80.10.50:FF:000017">
    <property type="entry name" value="Polypeptide N-acetylgalactosaminyltransferase"/>
    <property type="match status" value="1"/>
</dbReference>
<dbReference type="FunFam" id="3.90.550.10:FF:000012">
    <property type="entry name" value="Polypeptide N-acetylgalactosaminyltransferase"/>
    <property type="match status" value="1"/>
</dbReference>
<dbReference type="Gene3D" id="2.80.10.50">
    <property type="match status" value="1"/>
</dbReference>
<dbReference type="Gene3D" id="3.90.550.10">
    <property type="entry name" value="Spore Coat Polysaccharide Biosynthesis Protein SpsA, Chain A"/>
    <property type="match status" value="1"/>
</dbReference>
<dbReference type="InterPro" id="IPR045885">
    <property type="entry name" value="GalNAc-T"/>
</dbReference>
<dbReference type="InterPro" id="IPR001173">
    <property type="entry name" value="Glyco_trans_2-like"/>
</dbReference>
<dbReference type="InterPro" id="IPR029044">
    <property type="entry name" value="Nucleotide-diphossugar_trans"/>
</dbReference>
<dbReference type="InterPro" id="IPR035992">
    <property type="entry name" value="Ricin_B-like_lectins"/>
</dbReference>
<dbReference type="InterPro" id="IPR000772">
    <property type="entry name" value="Ricin_B_lectin"/>
</dbReference>
<dbReference type="PANTHER" id="PTHR11675">
    <property type="entry name" value="N-ACETYLGALACTOSAMINYLTRANSFERASE"/>
    <property type="match status" value="1"/>
</dbReference>
<dbReference type="PANTHER" id="PTHR11675:SF37">
    <property type="entry name" value="POLYPEPTIDE N-ACETYLGALACTOSAMINYLTRANSFERASE 18"/>
    <property type="match status" value="1"/>
</dbReference>
<dbReference type="Pfam" id="PF00535">
    <property type="entry name" value="Glycos_transf_2"/>
    <property type="match status" value="1"/>
</dbReference>
<dbReference type="Pfam" id="PF00652">
    <property type="entry name" value="Ricin_B_lectin"/>
    <property type="match status" value="1"/>
</dbReference>
<dbReference type="SMART" id="SM00458">
    <property type="entry name" value="RICIN"/>
    <property type="match status" value="1"/>
</dbReference>
<dbReference type="SUPFAM" id="SSF53448">
    <property type="entry name" value="Nucleotide-diphospho-sugar transferases"/>
    <property type="match status" value="1"/>
</dbReference>
<dbReference type="SUPFAM" id="SSF50370">
    <property type="entry name" value="Ricin B-like lectins"/>
    <property type="match status" value="1"/>
</dbReference>
<dbReference type="PROSITE" id="PS50231">
    <property type="entry name" value="RICIN_B_LECTIN"/>
    <property type="match status" value="1"/>
</dbReference>
<reference key="1">
    <citation type="submission" date="1999-02" db="EMBL/GenBank/DDBJ databases">
        <authorList>
            <person name="Mei G."/>
            <person name="Yu W."/>
            <person name="Gibbs R.A."/>
        </authorList>
    </citation>
    <scope>NUCLEOTIDE SEQUENCE [LARGE SCALE MRNA] (ISOFORM 2)</scope>
    <source>
        <tissue>Brain</tissue>
    </source>
</reference>
<reference key="2">
    <citation type="journal article" date="2004" name="Genome Res.">
        <title>The status, quality, and expansion of the NIH full-length cDNA project: the Mammalian Gene Collection (MGC).</title>
        <authorList>
            <consortium name="The MGC Project Team"/>
        </authorList>
    </citation>
    <scope>NUCLEOTIDE SEQUENCE [LARGE SCALE MRNA] (ISOFORM 1)</scope>
    <source>
        <tissue>Placenta</tissue>
    </source>
</reference>
<reference key="3">
    <citation type="journal article" date="2012" name="Glycobiology">
        <title>UDP-N-acetyl-alpha-D-galactosamine:polypeptide N-acetylgalactosaminyltransferases: completion of the family tree.</title>
        <authorList>
            <person name="Raman J."/>
            <person name="Guan Y."/>
            <person name="Perrine C.L."/>
            <person name="Gerken T.A."/>
            <person name="Tabak L.A."/>
        </authorList>
    </citation>
    <scope>FUNCTION</scope>
    <scope>CATALYTIC ACTIVITY</scope>
    <scope>PATHWAY</scope>
</reference>
<protein>
    <recommendedName>
        <fullName>Polypeptide N-acetylgalactosaminyltransferase 18</fullName>
        <ecNumber evidence="8">2.4.1.41</ecNumber>
    </recommendedName>
    <alternativeName>
        <fullName>Polypeptide GalNAc transferase 18</fullName>
        <shortName>GalNAc-T18</shortName>
    </alternativeName>
    <alternativeName>
        <fullName>Polypeptide GalNAc transferase-like protein 4</fullName>
        <shortName>GalNAc-T-like protein 4</shortName>
        <shortName>pp-GaNTase-like protein 4</shortName>
    </alternativeName>
    <alternativeName>
        <fullName>Polypeptide N-acetylgalactosaminyltransferase-like protein 4</fullName>
    </alternativeName>
    <alternativeName>
        <fullName>Protein-UDP acetylgalactosaminyltransferase-like protein 4</fullName>
    </alternativeName>
    <alternativeName>
        <fullName>UDP-GalNAc:polypeptide N-acetylgalactosaminyltransferase-like protein 4</fullName>
    </alternativeName>
</protein>
<sequence length="607" mass="69561">MVCTRKTKTLVSTCVILSGMTNIICLLYVGWVTNYIASVYVRGQEPAPDKKLEEDKGDTLKIIERLDHLENVIKQHIQEAPAKPEEAEAEPFTDSSLFAHWGQELSPEGRRVALKQFQYYGYNAYLSDRLPLDRPLPDLRPSGCRNLSFPDSLPEVSIVFIFVNEALSVLLRSIHSAMERTPPHLLKEIILVDDNSSNEELKEKLTEYVDKVNSQKPGFIKVVRHSKQEGLIRSRVSGWRAATAPVVALFDAHVEFNVGWAEPVLTRIKENRKRIISPSFDNIKYDNFEIEEYPLAAQGFDWELWCRYLNPPKAWWKLENSTAPIRSPALIGCFIVDRQYFQEIGLLDEGMEVYGGENVELGIRVWQCGGSVEVLPCSRIAHIERAHKPYTEDLTAHVRRNALRVAEVWMDEFKSHVYMAWNIPQEDSGIDIGDITARKALRKQLQCKTFRWYLVSVYPEMRMYSDIIAYGVLQNSLKTDLCLDQGPDTENVPIMYICHGMTPQNVYYTSSQQIHVGILSPTVDDDDNRCLVDVNSRPRLIECSYAKAKRMKLHWQFSQGGPIQNRKSKRCLELQENSDLEFGFQLVLQKCSGQHWSITNVLRSLAS</sequence>
<accession>Q6P9A2</accession>
<accession>O95903</accession>
<accession>Q8NDY9</accession>
<keyword id="KW-0025">Alternative splicing</keyword>
<keyword id="KW-1015">Disulfide bond</keyword>
<keyword id="KW-0325">Glycoprotein</keyword>
<keyword id="KW-0328">Glycosyltransferase</keyword>
<keyword id="KW-0333">Golgi apparatus</keyword>
<keyword id="KW-0430">Lectin</keyword>
<keyword id="KW-0464">Manganese</keyword>
<keyword id="KW-0472">Membrane</keyword>
<keyword id="KW-0479">Metal-binding</keyword>
<keyword id="KW-1267">Proteomics identification</keyword>
<keyword id="KW-1185">Reference proteome</keyword>
<keyword id="KW-0735">Signal-anchor</keyword>
<keyword id="KW-0808">Transferase</keyword>
<keyword id="KW-0812">Transmembrane</keyword>
<keyword id="KW-1133">Transmembrane helix</keyword>